<gene>
    <name type="ORF">AWRI1631_21620</name>
</gene>
<comment type="function">
    <text evidence="1">May be involved in vacuolar sorting and osmoregulation.</text>
</comment>
<comment type="cofactor">
    <cofactor evidence="2">
        <name>Zn(2+)</name>
        <dbReference type="ChEBI" id="CHEBI:29105"/>
    </cofactor>
    <text evidence="2">Binds 2 Zn(2+) ions per subunit.</text>
</comment>
<comment type="subcellular location">
    <subcellularLocation>
        <location evidence="1">Vacuole membrane</location>
        <topology evidence="3">Multi-pass membrane protein</topology>
    </subcellularLocation>
</comment>
<comment type="similarity">
    <text evidence="6">Belongs to the peptidase M28 family.</text>
</comment>
<reference key="1">
    <citation type="journal article" date="2008" name="FEMS Yeast Res.">
        <title>Comparative genome analysis of a Saccharomyces cerevisiae wine strain.</title>
        <authorList>
            <person name="Borneman A.R."/>
            <person name="Forgan A.H."/>
            <person name="Pretorius I.S."/>
            <person name="Chambers P.J."/>
        </authorList>
    </citation>
    <scope>NUCLEOTIDE SEQUENCE [LARGE SCALE GENOMIC DNA]</scope>
    <source>
        <strain>AWRI1631</strain>
    </source>
</reference>
<dbReference type="EC" id="3.4.-.-" evidence="6"/>
<dbReference type="EMBL" id="ABSV01000113">
    <property type="protein sequence ID" value="EDZ73803.1"/>
    <property type="molecule type" value="Genomic_DNA"/>
</dbReference>
<dbReference type="SMR" id="B5VE39"/>
<dbReference type="Proteomes" id="UP000008988">
    <property type="component" value="Unassembled WGS sequence"/>
</dbReference>
<dbReference type="GO" id="GO:0005774">
    <property type="term" value="C:vacuolar membrane"/>
    <property type="evidence" value="ECO:0007669"/>
    <property type="project" value="UniProtKB-SubCell"/>
</dbReference>
<dbReference type="GO" id="GO:0046872">
    <property type="term" value="F:metal ion binding"/>
    <property type="evidence" value="ECO:0007669"/>
    <property type="project" value="UniProtKB-KW"/>
</dbReference>
<dbReference type="GO" id="GO:0008235">
    <property type="term" value="F:metalloexopeptidase activity"/>
    <property type="evidence" value="ECO:0007669"/>
    <property type="project" value="InterPro"/>
</dbReference>
<dbReference type="GO" id="GO:0006508">
    <property type="term" value="P:proteolysis"/>
    <property type="evidence" value="ECO:0007669"/>
    <property type="project" value="UniProtKB-KW"/>
</dbReference>
<dbReference type="CDD" id="cd03875">
    <property type="entry name" value="M28_Fxna_like"/>
    <property type="match status" value="1"/>
</dbReference>
<dbReference type="FunFam" id="3.40.630.10:FF:000057">
    <property type="entry name" value="Vacuolar membrane protease"/>
    <property type="match status" value="1"/>
</dbReference>
<dbReference type="Gene3D" id="3.40.630.10">
    <property type="entry name" value="Zn peptidases"/>
    <property type="match status" value="1"/>
</dbReference>
<dbReference type="InterPro" id="IPR048024">
    <property type="entry name" value="Fxna-like_M28_dom"/>
</dbReference>
<dbReference type="InterPro" id="IPR045175">
    <property type="entry name" value="M28_fam"/>
</dbReference>
<dbReference type="InterPro" id="IPR007484">
    <property type="entry name" value="Peptidase_M28"/>
</dbReference>
<dbReference type="InterPro" id="IPR053975">
    <property type="entry name" value="PFF1_C"/>
</dbReference>
<dbReference type="InterPro" id="IPR053976">
    <property type="entry name" value="PFF1_TM"/>
</dbReference>
<dbReference type="PANTHER" id="PTHR12147">
    <property type="entry name" value="METALLOPEPTIDASE M28 FAMILY MEMBER"/>
    <property type="match status" value="1"/>
</dbReference>
<dbReference type="PANTHER" id="PTHR12147:SF58">
    <property type="entry name" value="VACUOLAR MEMBRANE PROTEASE"/>
    <property type="match status" value="1"/>
</dbReference>
<dbReference type="Pfam" id="PF04389">
    <property type="entry name" value="Peptidase_M28"/>
    <property type="match status" value="1"/>
</dbReference>
<dbReference type="Pfam" id="PF22250">
    <property type="entry name" value="PFF1_C"/>
    <property type="match status" value="1"/>
</dbReference>
<dbReference type="Pfam" id="PF22251">
    <property type="entry name" value="PFF1_TM"/>
    <property type="match status" value="1"/>
</dbReference>
<dbReference type="SUPFAM" id="SSF53187">
    <property type="entry name" value="Zn-dependent exopeptidases"/>
    <property type="match status" value="1"/>
</dbReference>
<protein>
    <recommendedName>
        <fullName evidence="1">Vacuolar membrane protease</fullName>
        <ecNumber evidence="6">3.4.-.-</ecNumber>
    </recommendedName>
    <alternativeName>
        <fullName evidence="1">FXNA-related family protease 1</fullName>
    </alternativeName>
</protein>
<keyword id="KW-0325">Glycoprotein</keyword>
<keyword id="KW-0378">Hydrolase</keyword>
<keyword id="KW-0472">Membrane</keyword>
<keyword id="KW-0479">Metal-binding</keyword>
<keyword id="KW-0482">Metalloprotease</keyword>
<keyword id="KW-0645">Protease</keyword>
<keyword id="KW-0812">Transmembrane</keyword>
<keyword id="KW-1133">Transmembrane helix</keyword>
<keyword id="KW-0926">Vacuole</keyword>
<keyword id="KW-0862">Zinc</keyword>
<accession>B5VE39</accession>
<proteinExistence type="inferred from homology"/>
<sequence>MKLKSVFRSVLKYRKTNLSLLLLITYSIITLLYIFDHERYKLNLPKEDEHPEFNDLLETAWGDLQIITASFHPYTSKENDKVHDYLLKRVLEITGNSSFASVSDDKESERSILFQQQDPFNESSRFSRVTYFESSNILVKLEGKNPEEEGLLLSAHFDSVPTGYGATDDGMGVVSLLANLKYHIKHRPNRTLIFNFNNNEEFGLLGASTYFNHSWSNLTKYVINLEGTGAGGKAVLFRTSDTSTAKIYQQSVKENPFGNSIYQQGFYSRYVRSETDYKIYEENGMRGWDVAFYKPRNLYHTIKDSIQYTSKASLWHMLHTSLQLSAYVASNSLDTADQTPACYFDFIGLKFFVISAKTLFYWNCIFLLVSPVVAIGLYLISRDRMTWKSHSWLSWTRFPLSLAAGIIVQKLFSNDIIRSNPLTFSRNYFWPISAFFTQVIFTSYVLINCSNFFFPCADMKSLSIIELFIILWTILLFTSKLLYSSDYRYTGLYPLSIFFLLSTIAAILRLLALALGMRTRKRLGRECRDHHSNYSSHSQIDMERDGQENLEQPQDQFTSSQDDQASIQDDNVSTTSAGPSHNVDEDHGMDSSSQQHDERVPLLKGSNSMEEGLSTRENSLKLEYTDYAWIIQFLLIVPIPSFILFNSVDVIMDALNHTVQEGSKATFDVLRFGMVGSILMALPILPFFYKVNYITISLTALLFLISASKTLLVHPFTNSNPLKVRFSQNIDLSQGNAASVHVLGREGNFLKPMLQDLPSIKYSSTHINCTSVTNGMELCMYDGMQPNLLSTNGNTNISSMVKVHVLHNNRNSTERSPYEPIVAELLLDVKENRACTLTFESRHQAKSPVREITVYQKKNSAPQKTNITKTIKSASGINELQLHKLDFDQETYHIGVQWFPKLLTDGNLEDDKLGTKDELSVSISCYWGEYDSESVVNGTAVRKIPAFDELINYAPLSFSFTNEQKGLVIVKDAIIL</sequence>
<name>PFF1_YEAS6</name>
<organism>
    <name type="scientific">Saccharomyces cerevisiae (strain AWRI1631)</name>
    <name type="common">Baker's yeast</name>
    <dbReference type="NCBI Taxonomy" id="545124"/>
    <lineage>
        <taxon>Eukaryota</taxon>
        <taxon>Fungi</taxon>
        <taxon>Dikarya</taxon>
        <taxon>Ascomycota</taxon>
        <taxon>Saccharomycotina</taxon>
        <taxon>Saccharomycetes</taxon>
        <taxon>Saccharomycetales</taxon>
        <taxon>Saccharomycetaceae</taxon>
        <taxon>Saccharomyces</taxon>
    </lineage>
</organism>
<feature type="chain" id="PRO_0000411752" description="Vacuolar membrane protease">
    <location>
        <begin position="1"/>
        <end position="976"/>
    </location>
</feature>
<feature type="topological domain" description="Cytoplasmic" evidence="1">
    <location>
        <begin position="1"/>
        <end position="15"/>
    </location>
</feature>
<feature type="transmembrane region" description="Helical; Name=1" evidence="3">
    <location>
        <begin position="16"/>
        <end position="36"/>
    </location>
</feature>
<feature type="topological domain" description="Vacuolar" evidence="1">
    <location>
        <begin position="37"/>
        <end position="359"/>
    </location>
</feature>
<feature type="transmembrane region" description="Helical; Name=2" evidence="3">
    <location>
        <begin position="360"/>
        <end position="380"/>
    </location>
</feature>
<feature type="topological domain" description="Cytoplasmic" evidence="1">
    <location>
        <begin position="381"/>
        <end position="392"/>
    </location>
</feature>
<feature type="transmembrane region" description="Helical; Name=3" evidence="3">
    <location>
        <begin position="393"/>
        <end position="412"/>
    </location>
</feature>
<feature type="topological domain" description="Vacuolar" evidence="1">
    <location>
        <begin position="413"/>
        <end position="428"/>
    </location>
</feature>
<feature type="transmembrane region" description="Helical; Name=4" evidence="3">
    <location>
        <begin position="429"/>
        <end position="449"/>
    </location>
</feature>
<feature type="topological domain" description="Cytoplasmic" evidence="1">
    <location>
        <begin position="450"/>
        <end position="461"/>
    </location>
</feature>
<feature type="transmembrane region" description="Helical; Name=5" evidence="3">
    <location>
        <begin position="462"/>
        <end position="482"/>
    </location>
</feature>
<feature type="topological domain" description="Vacuolar" evidence="1">
    <location>
        <begin position="483"/>
        <end position="496"/>
    </location>
</feature>
<feature type="transmembrane region" description="Helical; Name=6" evidence="3">
    <location>
        <begin position="497"/>
        <end position="517"/>
    </location>
</feature>
<feature type="topological domain" description="Cytoplasmic" evidence="1">
    <location>
        <begin position="518"/>
        <end position="627"/>
    </location>
</feature>
<feature type="transmembrane region" description="Helical; Name=7" evidence="3">
    <location>
        <begin position="628"/>
        <end position="648"/>
    </location>
</feature>
<feature type="topological domain" description="Vacuolar" evidence="1">
    <location>
        <begin position="649"/>
        <end position="668"/>
    </location>
</feature>
<feature type="transmembrane region" description="Helical; Name=8" evidence="3">
    <location>
        <begin position="669"/>
        <end position="689"/>
    </location>
</feature>
<feature type="topological domain" description="Cytoplasmic" evidence="1">
    <location>
        <begin position="690"/>
        <end position="692"/>
    </location>
</feature>
<feature type="transmembrane region" description="Helical; Name=9" evidence="3">
    <location>
        <begin position="693"/>
        <end position="713"/>
    </location>
</feature>
<feature type="topological domain" description="Vacuolar" evidence="1">
    <location>
        <begin position="714"/>
        <end position="976"/>
    </location>
</feature>
<feature type="region of interest" description="Disordered" evidence="5">
    <location>
        <begin position="528"/>
        <end position="610"/>
    </location>
</feature>
<feature type="compositionally biased region" description="Polar residues" evidence="5">
    <location>
        <begin position="549"/>
        <end position="558"/>
    </location>
</feature>
<feature type="compositionally biased region" description="Low complexity" evidence="5">
    <location>
        <begin position="559"/>
        <end position="570"/>
    </location>
</feature>
<feature type="compositionally biased region" description="Basic and acidic residues" evidence="5">
    <location>
        <begin position="582"/>
        <end position="601"/>
    </location>
</feature>
<feature type="active site" description="Proton acceptor" evidence="2">
    <location>
        <position position="200"/>
    </location>
</feature>
<feature type="binding site" evidence="2">
    <location>
        <position position="156"/>
    </location>
    <ligand>
        <name>Zn(2+)</name>
        <dbReference type="ChEBI" id="CHEBI:29105"/>
        <label>1</label>
        <note>catalytic</note>
    </ligand>
</feature>
<feature type="binding site" evidence="2">
    <location>
        <position position="168"/>
    </location>
    <ligand>
        <name>Zn(2+)</name>
        <dbReference type="ChEBI" id="CHEBI:29105"/>
        <label>1</label>
        <note>catalytic</note>
    </ligand>
</feature>
<feature type="binding site" evidence="2">
    <location>
        <position position="168"/>
    </location>
    <ligand>
        <name>Zn(2+)</name>
        <dbReference type="ChEBI" id="CHEBI:29105"/>
        <label>2</label>
        <note>catalytic</note>
    </ligand>
</feature>
<feature type="binding site" evidence="2">
    <location>
        <position position="201"/>
    </location>
    <ligand>
        <name>Zn(2+)</name>
        <dbReference type="ChEBI" id="CHEBI:29105"/>
        <label>2</label>
        <note>catalytic</note>
    </ligand>
</feature>
<feature type="binding site" evidence="2">
    <location>
        <position position="226"/>
    </location>
    <ligand>
        <name>Zn(2+)</name>
        <dbReference type="ChEBI" id="CHEBI:29105"/>
        <label>1</label>
        <note>catalytic</note>
    </ligand>
</feature>
<feature type="binding site" evidence="2">
    <location>
        <position position="300"/>
    </location>
    <ligand>
        <name>Zn(2+)</name>
        <dbReference type="ChEBI" id="CHEBI:29105"/>
        <label>2</label>
        <note>catalytic</note>
    </ligand>
</feature>
<feature type="site" description="Transition state stabilizer" evidence="2">
    <location>
        <position position="299"/>
    </location>
</feature>
<feature type="glycosylation site" description="N-linked (GlcNAc...) asparagine" evidence="4">
    <location>
        <position position="96"/>
    </location>
</feature>
<feature type="glycosylation site" description="N-linked (GlcNAc...) asparagine" evidence="4">
    <location>
        <position position="121"/>
    </location>
</feature>
<feature type="glycosylation site" description="N-linked (GlcNAc...) asparagine" evidence="4">
    <location>
        <position position="189"/>
    </location>
</feature>
<feature type="glycosylation site" description="N-linked (GlcNAc...) asparagine" evidence="4">
    <location>
        <position position="212"/>
    </location>
</feature>
<feature type="glycosylation site" description="N-linked (GlcNAc...) asparagine" evidence="4">
    <location>
        <position position="217"/>
    </location>
</feature>
<feature type="glycosylation site" description="N-linked (GlcNAc...) asparagine" evidence="4">
    <location>
        <position position="656"/>
    </location>
</feature>
<feature type="glycosylation site" description="N-linked (GlcNAc...) asparagine" evidence="4">
    <location>
        <position position="768"/>
    </location>
</feature>
<feature type="glycosylation site" description="N-linked (GlcNAc...) asparagine" evidence="4">
    <location>
        <position position="796"/>
    </location>
</feature>
<feature type="glycosylation site" description="N-linked (GlcNAc...) asparagine" evidence="4">
    <location>
        <position position="811"/>
    </location>
</feature>
<feature type="glycosylation site" description="N-linked (GlcNAc...) asparagine" evidence="4">
    <location>
        <position position="866"/>
    </location>
</feature>
<feature type="glycosylation site" description="N-linked (GlcNAc...) asparagine" evidence="4">
    <location>
        <position position="937"/>
    </location>
</feature>
<evidence type="ECO:0000250" key="1">
    <source>
        <dbReference type="UniProtKB" id="P38244"/>
    </source>
</evidence>
<evidence type="ECO:0000250" key="2">
    <source>
        <dbReference type="UniProtKB" id="P80561"/>
    </source>
</evidence>
<evidence type="ECO:0000255" key="3"/>
<evidence type="ECO:0000255" key="4">
    <source>
        <dbReference type="PROSITE-ProRule" id="PRU00498"/>
    </source>
</evidence>
<evidence type="ECO:0000256" key="5">
    <source>
        <dbReference type="SAM" id="MobiDB-lite"/>
    </source>
</evidence>
<evidence type="ECO:0000305" key="6"/>